<name>NU2M_DOBMI</name>
<evidence type="ECO:0000250" key="1">
    <source>
        <dbReference type="UniProtKB" id="P03891"/>
    </source>
</evidence>
<evidence type="ECO:0000250" key="2">
    <source>
        <dbReference type="UniProtKB" id="P03892"/>
    </source>
</evidence>
<evidence type="ECO:0000255" key="3"/>
<evidence type="ECO:0000305" key="4"/>
<sequence>MNPAIFTTIILTMILGTMIVTTSSHWLTVWIGFEMNMLAIIPILMKKYNPRSMEASTKYFLTQATASMLLMLAITINLVYSGQWSVTKPLTPMASITMTLAMAMKLGLSPFHFWVPEVTQGTQLSSGLILLTWQKLAPMSILYQISPTINLELLLMMAILSIAIGGWGGLNQTQLRKIMAYSSIAHMGWMTAIMAYNPAMTLLNLXVYILLTTTXFMMLMLNSSTTTLSLSHTWNKTPLLATTILLIMLSLGGLPPLSGFXPKWMIIQEMTKNDSIIMPTIMAMAALLNLYFYMRLTYSTSLTMFPSTNNMKMKWQFNSTKPMTYISPLIILSTLXLPLSPMLTLLE</sequence>
<organism>
    <name type="scientific">Dobsonia minor</name>
    <name type="common">Lesser bare-backed fruit bat</name>
    <dbReference type="NCBI Taxonomy" id="170215"/>
    <lineage>
        <taxon>Eukaryota</taxon>
        <taxon>Metazoa</taxon>
        <taxon>Chordata</taxon>
        <taxon>Craniata</taxon>
        <taxon>Vertebrata</taxon>
        <taxon>Euteleostomi</taxon>
        <taxon>Mammalia</taxon>
        <taxon>Eutheria</taxon>
        <taxon>Laurasiatheria</taxon>
        <taxon>Chiroptera</taxon>
        <taxon>Yinpterochiroptera</taxon>
        <taxon>Pteropodoidea</taxon>
        <taxon>Pteropodidae</taxon>
        <taxon>Pteropodinae</taxon>
        <taxon>Dobsonia</taxon>
    </lineage>
</organism>
<dbReference type="EC" id="7.1.1.2" evidence="1"/>
<dbReference type="EMBL" id="AY504584">
    <property type="protein sequence ID" value="AAS91449.1"/>
    <property type="molecule type" value="Genomic_DNA"/>
</dbReference>
<dbReference type="GO" id="GO:0005743">
    <property type="term" value="C:mitochondrial inner membrane"/>
    <property type="evidence" value="ECO:0000250"/>
    <property type="project" value="UniProtKB"/>
</dbReference>
<dbReference type="GO" id="GO:0008137">
    <property type="term" value="F:NADH dehydrogenase (ubiquinone) activity"/>
    <property type="evidence" value="ECO:0000250"/>
    <property type="project" value="UniProtKB"/>
</dbReference>
<dbReference type="GO" id="GO:0006120">
    <property type="term" value="P:mitochondrial electron transport, NADH to ubiquinone"/>
    <property type="evidence" value="ECO:0000250"/>
    <property type="project" value="UniProtKB"/>
</dbReference>
<dbReference type="GO" id="GO:0032981">
    <property type="term" value="P:mitochondrial respiratory chain complex I assembly"/>
    <property type="evidence" value="ECO:0000250"/>
    <property type="project" value="UniProtKB"/>
</dbReference>
<dbReference type="InterPro" id="IPR050175">
    <property type="entry name" value="Complex_I_Subunit_2"/>
</dbReference>
<dbReference type="InterPro" id="IPR010933">
    <property type="entry name" value="NADH_DH_su2_C"/>
</dbReference>
<dbReference type="InterPro" id="IPR003917">
    <property type="entry name" value="NADH_UbQ_OxRdtase_chain2"/>
</dbReference>
<dbReference type="InterPro" id="IPR001750">
    <property type="entry name" value="ND/Mrp_TM"/>
</dbReference>
<dbReference type="PANTHER" id="PTHR46552">
    <property type="entry name" value="NADH-UBIQUINONE OXIDOREDUCTASE CHAIN 2"/>
    <property type="match status" value="1"/>
</dbReference>
<dbReference type="PANTHER" id="PTHR46552:SF1">
    <property type="entry name" value="NADH-UBIQUINONE OXIDOREDUCTASE CHAIN 2"/>
    <property type="match status" value="1"/>
</dbReference>
<dbReference type="Pfam" id="PF06444">
    <property type="entry name" value="NADH_dehy_S2_C"/>
    <property type="match status" value="1"/>
</dbReference>
<dbReference type="Pfam" id="PF00361">
    <property type="entry name" value="Proton_antipo_M"/>
    <property type="match status" value="1"/>
</dbReference>
<dbReference type="PRINTS" id="PR01436">
    <property type="entry name" value="NADHDHGNASE2"/>
</dbReference>
<proteinExistence type="inferred from homology"/>
<reference key="1">
    <citation type="submission" date="2003-12" db="EMBL/GenBank/DDBJ databases">
        <title>Bats and birds: flying in the face of mtDNA evolutionary rates.</title>
        <authorList>
            <person name="Worthington Wilmer J.M."/>
            <person name="Schneider C.J."/>
            <person name="Sorenson M.D."/>
        </authorList>
    </citation>
    <scope>NUCLEOTIDE SEQUENCE [GENOMIC DNA]</scope>
    <source>
        <strain>Isolate 1</strain>
    </source>
</reference>
<accession>Q330A8</accession>
<gene>
    <name evidence="1" type="primary">MT-ND2</name>
    <name type="synonym">MTND2</name>
    <name type="synonym">NADH2</name>
    <name type="synonym">ND2</name>
</gene>
<geneLocation type="mitochondrion"/>
<feature type="chain" id="PRO_0000256664" description="NADH-ubiquinone oxidoreductase chain 2">
    <location>
        <begin position="1"/>
        <end position="347"/>
    </location>
</feature>
<feature type="transmembrane region" description="Helical" evidence="3">
    <location>
        <begin position="1"/>
        <end position="21"/>
    </location>
</feature>
<feature type="transmembrane region" description="Helical" evidence="3">
    <location>
        <begin position="25"/>
        <end position="45"/>
    </location>
</feature>
<feature type="transmembrane region" description="Helical" evidence="3">
    <location>
        <begin position="59"/>
        <end position="79"/>
    </location>
</feature>
<feature type="transmembrane region" description="Helical" evidence="3">
    <location>
        <begin position="96"/>
        <end position="116"/>
    </location>
</feature>
<feature type="transmembrane region" description="Helical" evidence="3">
    <location>
        <begin position="127"/>
        <end position="147"/>
    </location>
</feature>
<feature type="transmembrane region" description="Helical" evidence="3">
    <location>
        <begin position="149"/>
        <end position="169"/>
    </location>
</feature>
<feature type="transmembrane region" description="Helical" evidence="3">
    <location>
        <begin position="178"/>
        <end position="198"/>
    </location>
</feature>
<feature type="transmembrane region" description="Helical" evidence="3">
    <location>
        <begin position="201"/>
        <end position="221"/>
    </location>
</feature>
<feature type="transmembrane region" description="Helical" evidence="3">
    <location>
        <begin position="240"/>
        <end position="260"/>
    </location>
</feature>
<feature type="transmembrane region" description="Helical" evidence="3">
    <location>
        <begin position="274"/>
        <end position="294"/>
    </location>
</feature>
<feature type="transmembrane region" description="Helical" evidence="3">
    <location>
        <begin position="326"/>
        <end position="346"/>
    </location>
</feature>
<keyword id="KW-0249">Electron transport</keyword>
<keyword id="KW-0472">Membrane</keyword>
<keyword id="KW-0496">Mitochondrion</keyword>
<keyword id="KW-0999">Mitochondrion inner membrane</keyword>
<keyword id="KW-0520">NAD</keyword>
<keyword id="KW-0679">Respiratory chain</keyword>
<keyword id="KW-1278">Translocase</keyword>
<keyword id="KW-0812">Transmembrane</keyword>
<keyword id="KW-1133">Transmembrane helix</keyword>
<keyword id="KW-0813">Transport</keyword>
<keyword id="KW-0830">Ubiquinone</keyword>
<comment type="function">
    <text evidence="1">Core subunit of the mitochondrial membrane respiratory chain NADH dehydrogenase (Complex I) which catalyzes electron transfer from NADH through the respiratory chain, using ubiquinone as an electron acceptor. Essential for the catalytic activity and assembly of complex I.</text>
</comment>
<comment type="catalytic activity">
    <reaction evidence="1">
        <text>a ubiquinone + NADH + 5 H(+)(in) = a ubiquinol + NAD(+) + 4 H(+)(out)</text>
        <dbReference type="Rhea" id="RHEA:29091"/>
        <dbReference type="Rhea" id="RHEA-COMP:9565"/>
        <dbReference type="Rhea" id="RHEA-COMP:9566"/>
        <dbReference type="ChEBI" id="CHEBI:15378"/>
        <dbReference type="ChEBI" id="CHEBI:16389"/>
        <dbReference type="ChEBI" id="CHEBI:17976"/>
        <dbReference type="ChEBI" id="CHEBI:57540"/>
        <dbReference type="ChEBI" id="CHEBI:57945"/>
        <dbReference type="EC" id="7.1.1.2"/>
    </reaction>
</comment>
<comment type="subunit">
    <text evidence="1 2">Core subunit of respiratory chain NADH dehydrogenase (Complex I) which is composed of 45 different subunits. Interacts with TMEM242 (By similarity).</text>
</comment>
<comment type="subcellular location">
    <subcellularLocation>
        <location evidence="2">Mitochondrion inner membrane</location>
        <topology evidence="3">Multi-pass membrane protein</topology>
    </subcellularLocation>
</comment>
<comment type="similarity">
    <text evidence="4">Belongs to the complex I subunit 2 family.</text>
</comment>
<protein>
    <recommendedName>
        <fullName evidence="1">NADH-ubiquinone oxidoreductase chain 2</fullName>
        <ecNumber evidence="1">7.1.1.2</ecNumber>
    </recommendedName>
    <alternativeName>
        <fullName>NADH dehydrogenase subunit 2</fullName>
    </alternativeName>
</protein>